<organism>
    <name type="scientific">Conus marmoreus</name>
    <name type="common">Marble cone</name>
    <dbReference type="NCBI Taxonomy" id="42752"/>
    <lineage>
        <taxon>Eukaryota</taxon>
        <taxon>Metazoa</taxon>
        <taxon>Spiralia</taxon>
        <taxon>Lophotrochozoa</taxon>
        <taxon>Mollusca</taxon>
        <taxon>Gastropoda</taxon>
        <taxon>Caenogastropoda</taxon>
        <taxon>Neogastropoda</taxon>
        <taxon>Conoidea</taxon>
        <taxon>Conidae</taxon>
        <taxon>Conus</taxon>
    </lineage>
</organism>
<keyword id="KW-0165">Cleavage on pair of basic residues</keyword>
<keyword id="KW-1015">Disulfide bond</keyword>
<keyword id="KW-0964">Secreted</keyword>
<keyword id="KW-0732">Signal</keyword>
<keyword id="KW-0800">Toxin</keyword>
<accession>P0DM20</accession>
<feature type="signal peptide" evidence="1">
    <location>
        <begin position="1"/>
        <end position="20"/>
    </location>
</feature>
<feature type="propeptide" id="PRO_0000444687" evidence="4">
    <location>
        <begin position="21"/>
        <end position="53"/>
    </location>
</feature>
<feature type="chain" id="PRO_0000444688" description="Conotoxin Mr15.3" evidence="4">
    <location>
        <begin position="54"/>
        <end position="92"/>
    </location>
</feature>
<reference key="1">
    <citation type="journal article" date="2013" name="Mol. Cell. Proteomics">
        <title>Deep venomics reveals the mechanism for expanded peptide diversity in cone snail venom.</title>
        <authorList>
            <person name="Dutertre S."/>
            <person name="Jin A.H."/>
            <person name="Kaas Q."/>
            <person name="Jones A."/>
            <person name="Alewood P.F."/>
            <person name="Lewis R.J."/>
        </authorList>
    </citation>
    <scope>NUCLEOTIDE SEQUENCE [MRNA]</scope>
    <scope>IDENTIFICATION BY MASS SPECTROMETRY</scope>
    <scope>SUBCELLULAR LOCATION</scope>
</reference>
<sequence length="92" mass="10167">MSTLKMMLLILLLLLPMATFDSDGQAIPGGGIPSAVNSRVRGDEKSGRSLEKRCRSGKTCPRVGPDECCERSDCFCKMVPARPYWRNKCICL</sequence>
<evidence type="ECO:0000255" key="1"/>
<evidence type="ECO:0000269" key="2">
    <source>
    </source>
</evidence>
<evidence type="ECO:0000303" key="3">
    <source>
    </source>
</evidence>
<evidence type="ECO:0000305" key="4"/>
<evidence type="ECO:0000305" key="5">
    <source>
    </source>
</evidence>
<comment type="subcellular location">
    <subcellularLocation>
        <location evidence="2">Secreted</location>
    </subcellularLocation>
</comment>
<comment type="tissue specificity">
    <text evidence="5">Expressed by the venom duct.</text>
</comment>
<comment type="domain">
    <text evidence="4">The cysteine framework is XV (C-C-CC-C-C-C-C).</text>
</comment>
<comment type="PTM">
    <text evidence="4">Contains 4 disulfide bonds.</text>
</comment>
<comment type="similarity">
    <text evidence="4">Belongs to the conotoxin N superfamily.</text>
</comment>
<dbReference type="GO" id="GO:0005576">
    <property type="term" value="C:extracellular region"/>
    <property type="evidence" value="ECO:0007669"/>
    <property type="project" value="UniProtKB-SubCell"/>
</dbReference>
<dbReference type="GO" id="GO:0090729">
    <property type="term" value="F:toxin activity"/>
    <property type="evidence" value="ECO:0007669"/>
    <property type="project" value="UniProtKB-KW"/>
</dbReference>
<protein>
    <recommendedName>
        <fullName evidence="4">Conotoxin Mr15.3</fullName>
    </recommendedName>
    <alternativeName>
        <fullName evidence="3">Mr095</fullName>
    </alternativeName>
</protein>
<proteinExistence type="evidence at protein level"/>
<name>NF3_CONMR</name>